<organism>
    <name type="scientific">Saccharomyces cerevisiae (strain ATCC 204508 / S288c)</name>
    <name type="common">Baker's yeast</name>
    <dbReference type="NCBI Taxonomy" id="559292"/>
    <lineage>
        <taxon>Eukaryota</taxon>
        <taxon>Fungi</taxon>
        <taxon>Dikarya</taxon>
        <taxon>Ascomycota</taxon>
        <taxon>Saccharomycotina</taxon>
        <taxon>Saccharomycetes</taxon>
        <taxon>Saccharomycetales</taxon>
        <taxon>Saccharomycetaceae</taxon>
        <taxon>Saccharomyces</taxon>
    </lineage>
</organism>
<protein>
    <recommendedName>
        <fullName evidence="1 11">Palmitoyltransferase PFA4</fullName>
        <ecNumber evidence="1 13">2.3.1.225</ecNumber>
    </recommendedName>
    <alternativeName>
        <fullName evidence="1 12">Protein S-acyltransferase</fullName>
        <shortName evidence="1">PAT</shortName>
    </alternativeName>
    <alternativeName>
        <fullName evidence="1">Protein fatty acyltransferase 4</fullName>
    </alternativeName>
</protein>
<proteinExistence type="evidence at protein level"/>
<feature type="chain" id="PRO_0000212972" description="Palmitoyltransferase PFA4">
    <location>
        <begin position="1"/>
        <end position="378"/>
    </location>
</feature>
<feature type="topological domain" description="Cytoplasmic" evidence="1 14">
    <location>
        <begin position="1"/>
        <end position="9"/>
    </location>
</feature>
<feature type="transmembrane region" description="Helical" evidence="1">
    <location>
        <begin position="10"/>
        <end position="30"/>
    </location>
</feature>
<feature type="topological domain" description="Lumenal" evidence="1 14">
    <location>
        <begin position="31"/>
        <end position="40"/>
    </location>
</feature>
<feature type="transmembrane region" description="Helical" evidence="1">
    <location>
        <begin position="41"/>
        <end position="61"/>
    </location>
</feature>
<feature type="topological domain" description="Cytoplasmic" evidence="1 14">
    <location>
        <begin position="62"/>
        <end position="119"/>
    </location>
</feature>
<feature type="transmembrane region" description="Helical" evidence="1">
    <location>
        <begin position="120"/>
        <end position="140"/>
    </location>
</feature>
<feature type="topological domain" description="Lumenal" evidence="1 14">
    <location>
        <begin position="141"/>
        <end position="164"/>
    </location>
</feature>
<feature type="transmembrane region" description="Helical" evidence="1">
    <location>
        <begin position="165"/>
        <end position="185"/>
    </location>
</feature>
<feature type="topological domain" description="Cytoplasmic" evidence="1 8">
    <location>
        <begin position="186"/>
        <end position="378"/>
    </location>
</feature>
<feature type="domain" description="DHHC" evidence="2">
    <location>
        <begin position="78"/>
        <end position="128"/>
    </location>
</feature>
<feature type="active site" description="S-palmitoyl cysteine intermediate" evidence="1 15">
    <location>
        <position position="108"/>
    </location>
</feature>
<feature type="mutagenesis site" description="Causes mislocalization of chitin synthase CHS3 (PubMed:16818716). Reduces, but does not abolish catalytic activity. Lacks autopalmitoylation (PubMed:26224664)." evidence="7 9">
    <original>C</original>
    <variation>A</variation>
    <location>
        <position position="108"/>
    </location>
</feature>
<feature type="mutagenesis site" description="Reduces, but does not abolish catalytic activity. Lacks autopalmitoylation." evidence="9">
    <original>C</original>
    <variation>R</variation>
    <location>
        <position position="108"/>
    </location>
</feature>
<name>PFA4_YEAST</name>
<sequence length="378" mass="44488">MPVKLRWPWLGIAIPTFLISFIGYGAHYFILSNFLSVPKQITFEFCLSMIWLSYYLAICTNPGRPLPNYKPPPDIWRNFCKKCQSYKPERSHHCKTCNQCVLMMDHHCPWTMNCVGFANYPHFLRFLFWIIVTTSVLFCIQAKRIYFIWQQRHLPGYFFKKSELIFLTISSPLNSFVLLTITILFLRCLFNQILNGRSQIESWDMDRLESLFNSGRLTQKLIDNTWRIYPESRSFQNKKDAEEHLTKKRPRFDELVNFPYDFDLYTNALLYLGPIHLWLWPYGVPTGDGNNFPKNGISKYEANSSLEDHILSLPWPPDGGKTNTVFNHGSSTIEMRNESGEQLIRTRLPQNGRHASREKWYNDWGESLDDFGVDVDME</sequence>
<keyword id="KW-0012">Acyltransferase</keyword>
<keyword id="KW-0256">Endoplasmic reticulum</keyword>
<keyword id="KW-0449">Lipoprotein</keyword>
<keyword id="KW-0472">Membrane</keyword>
<keyword id="KW-0564">Palmitate</keyword>
<keyword id="KW-1185">Reference proteome</keyword>
<keyword id="KW-0808">Transferase</keyword>
<keyword id="KW-0812">Transmembrane</keyword>
<keyword id="KW-1133">Transmembrane helix</keyword>
<dbReference type="EC" id="2.3.1.225" evidence="1 13"/>
<dbReference type="EMBL" id="U43491">
    <property type="protein sequence ID" value="AAC49477.1"/>
    <property type="molecule type" value="Genomic_DNA"/>
</dbReference>
<dbReference type="EMBL" id="Z74745">
    <property type="protein sequence ID" value="CAA99002.1"/>
    <property type="molecule type" value="Genomic_DNA"/>
</dbReference>
<dbReference type="EMBL" id="AY558023">
    <property type="protein sequence ID" value="AAS56349.1"/>
    <property type="molecule type" value="Genomic_DNA"/>
</dbReference>
<dbReference type="EMBL" id="BK006948">
    <property type="protein sequence ID" value="DAA10780.1"/>
    <property type="molecule type" value="Genomic_DNA"/>
</dbReference>
<dbReference type="PIR" id="S61981">
    <property type="entry name" value="S61981"/>
</dbReference>
<dbReference type="RefSeq" id="NP_014640.1">
    <property type="nucleotide sequence ID" value="NM_001183257.1"/>
</dbReference>
<dbReference type="SMR" id="Q12006"/>
<dbReference type="BioGRID" id="34401">
    <property type="interactions" value="138"/>
</dbReference>
<dbReference type="DIP" id="DIP-4248N"/>
<dbReference type="FunCoup" id="Q12006">
    <property type="interactions" value="51"/>
</dbReference>
<dbReference type="IntAct" id="Q12006">
    <property type="interactions" value="3"/>
</dbReference>
<dbReference type="STRING" id="4932.YOL003C"/>
<dbReference type="iPTMnet" id="Q12006"/>
<dbReference type="PaxDb" id="4932-YOL003C"/>
<dbReference type="PeptideAtlas" id="Q12006"/>
<dbReference type="DNASU" id="854159"/>
<dbReference type="EnsemblFungi" id="YOL003C_mRNA">
    <property type="protein sequence ID" value="YOL003C"/>
    <property type="gene ID" value="YOL003C"/>
</dbReference>
<dbReference type="GeneID" id="854159"/>
<dbReference type="KEGG" id="sce:YOL003C"/>
<dbReference type="AGR" id="SGD:S000005363"/>
<dbReference type="SGD" id="S000005363">
    <property type="gene designation" value="PFA4"/>
</dbReference>
<dbReference type="VEuPathDB" id="FungiDB:YOL003C"/>
<dbReference type="eggNOG" id="KOG1314">
    <property type="taxonomic scope" value="Eukaryota"/>
</dbReference>
<dbReference type="HOGENOM" id="CLU_027721_8_0_1"/>
<dbReference type="InParanoid" id="Q12006"/>
<dbReference type="OMA" id="TMNCVGY"/>
<dbReference type="OrthoDB" id="331948at2759"/>
<dbReference type="BioCyc" id="YEAST:G3O-33420-MONOMER"/>
<dbReference type="BRENDA" id="2.3.1.225">
    <property type="organism ID" value="984"/>
</dbReference>
<dbReference type="BioGRID-ORCS" id="854159">
    <property type="hits" value="1 hit in 10 CRISPR screens"/>
</dbReference>
<dbReference type="PRO" id="PR:Q12006"/>
<dbReference type="Proteomes" id="UP000002311">
    <property type="component" value="Chromosome XV"/>
</dbReference>
<dbReference type="RNAct" id="Q12006">
    <property type="molecule type" value="protein"/>
</dbReference>
<dbReference type="GO" id="GO:0005783">
    <property type="term" value="C:endoplasmic reticulum"/>
    <property type="evidence" value="ECO:0000314"/>
    <property type="project" value="SGD"/>
</dbReference>
<dbReference type="GO" id="GO:0005789">
    <property type="term" value="C:endoplasmic reticulum membrane"/>
    <property type="evidence" value="ECO:0007669"/>
    <property type="project" value="UniProtKB-SubCell"/>
</dbReference>
<dbReference type="GO" id="GO:0005794">
    <property type="term" value="C:Golgi apparatus"/>
    <property type="evidence" value="ECO:0000318"/>
    <property type="project" value="GO_Central"/>
</dbReference>
<dbReference type="GO" id="GO:0016409">
    <property type="term" value="F:palmitoyltransferase activity"/>
    <property type="evidence" value="ECO:0000314"/>
    <property type="project" value="UniProtKB"/>
</dbReference>
<dbReference type="GO" id="GO:0019706">
    <property type="term" value="F:protein-cysteine S-palmitoyltransferase activity"/>
    <property type="evidence" value="ECO:0000318"/>
    <property type="project" value="GO_Central"/>
</dbReference>
<dbReference type="GO" id="GO:0018345">
    <property type="term" value="P:protein palmitoylation"/>
    <property type="evidence" value="ECO:0000314"/>
    <property type="project" value="UniProtKB"/>
</dbReference>
<dbReference type="GO" id="GO:0006612">
    <property type="term" value="P:protein targeting to membrane"/>
    <property type="evidence" value="ECO:0000318"/>
    <property type="project" value="GO_Central"/>
</dbReference>
<dbReference type="HAMAP" id="MF_03199">
    <property type="entry name" value="DHHC_PAT_PFA4"/>
    <property type="match status" value="1"/>
</dbReference>
<dbReference type="InterPro" id="IPR001594">
    <property type="entry name" value="Palmitoyltrfase_DHHC"/>
</dbReference>
<dbReference type="InterPro" id="IPR033682">
    <property type="entry name" value="PFA4"/>
</dbReference>
<dbReference type="InterPro" id="IPR039859">
    <property type="entry name" value="PFA4/ZDH16/20/ERF2-like"/>
</dbReference>
<dbReference type="PANTHER" id="PTHR12246">
    <property type="entry name" value="PALMITOYLTRANSFERASE ZDHHC16"/>
    <property type="match status" value="1"/>
</dbReference>
<dbReference type="Pfam" id="PF01529">
    <property type="entry name" value="DHHC"/>
    <property type="match status" value="1"/>
</dbReference>
<dbReference type="PROSITE" id="PS50216">
    <property type="entry name" value="DHHC"/>
    <property type="match status" value="1"/>
</dbReference>
<accession>Q12006</accession>
<accession>D6W264</accession>
<gene>
    <name evidence="1 11" type="primary">PFA4</name>
    <name evidence="16" type="ordered locus">YOL003C</name>
    <name type="ORF">UNE378</name>
</gene>
<evidence type="ECO:0000255" key="1">
    <source>
        <dbReference type="HAMAP-Rule" id="MF_03199"/>
    </source>
</evidence>
<evidence type="ECO:0000255" key="2">
    <source>
        <dbReference type="PROSITE-ProRule" id="PRU00067"/>
    </source>
</evidence>
<evidence type="ECO:0000269" key="3">
    <source>
    </source>
</evidence>
<evidence type="ECO:0000269" key="4">
    <source>
    </source>
</evidence>
<evidence type="ECO:0000269" key="5">
    <source>
    </source>
</evidence>
<evidence type="ECO:0000269" key="6">
    <source>
    </source>
</evidence>
<evidence type="ECO:0000269" key="7">
    <source>
    </source>
</evidence>
<evidence type="ECO:0000269" key="8">
    <source>
    </source>
</evidence>
<evidence type="ECO:0000269" key="9">
    <source>
    </source>
</evidence>
<evidence type="ECO:0000269" key="10">
    <source>
    </source>
</evidence>
<evidence type="ECO:0000303" key="11">
    <source>
    </source>
</evidence>
<evidence type="ECO:0000303" key="12">
    <source>
    </source>
</evidence>
<evidence type="ECO:0000305" key="13">
    <source>
    </source>
</evidence>
<evidence type="ECO:0000305" key="14">
    <source>
    </source>
</evidence>
<evidence type="ECO:0000305" key="15">
    <source>
    </source>
</evidence>
<evidence type="ECO:0000312" key="16">
    <source>
        <dbReference type="SGD" id="S000005363"/>
    </source>
</evidence>
<reference key="1">
    <citation type="journal article" date="1996" name="Yeast">
        <title>The sequence of a 30 kb fragment on the left arm of chromosome XV from Saccharomyces cerevisiae reveals 15 open reading frames, five of which correspond to previously identified genes.</title>
        <authorList>
            <person name="Sterky F."/>
            <person name="Holmberg A."/>
            <person name="Pettersson B."/>
            <person name="Uhlen M."/>
        </authorList>
    </citation>
    <scope>NUCLEOTIDE SEQUENCE [GENOMIC DNA]</scope>
</reference>
<reference key="2">
    <citation type="journal article" date="1997" name="Nature">
        <title>The nucleotide sequence of Saccharomyces cerevisiae chromosome XV.</title>
        <authorList>
            <person name="Dujon B."/>
            <person name="Albermann K."/>
            <person name="Aldea M."/>
            <person name="Alexandraki D."/>
            <person name="Ansorge W."/>
            <person name="Arino J."/>
            <person name="Benes V."/>
            <person name="Bohn C."/>
            <person name="Bolotin-Fukuhara M."/>
            <person name="Bordonne R."/>
            <person name="Boyer J."/>
            <person name="Camasses A."/>
            <person name="Casamayor A."/>
            <person name="Casas C."/>
            <person name="Cheret G."/>
            <person name="Cziepluch C."/>
            <person name="Daignan-Fornier B."/>
            <person name="Dang V.-D."/>
            <person name="de Haan M."/>
            <person name="Delius H."/>
            <person name="Durand P."/>
            <person name="Fairhead C."/>
            <person name="Feldmann H."/>
            <person name="Gaillon L."/>
            <person name="Galisson F."/>
            <person name="Gamo F.-J."/>
            <person name="Gancedo C."/>
            <person name="Goffeau A."/>
            <person name="Goulding S.E."/>
            <person name="Grivell L.A."/>
            <person name="Habbig B."/>
            <person name="Hand N.J."/>
            <person name="Hani J."/>
            <person name="Hattenhorst U."/>
            <person name="Hebling U."/>
            <person name="Hernando Y."/>
            <person name="Herrero E."/>
            <person name="Heumann K."/>
            <person name="Hiesel R."/>
            <person name="Hilger F."/>
            <person name="Hofmann B."/>
            <person name="Hollenberg C.P."/>
            <person name="Hughes B."/>
            <person name="Jauniaux J.-C."/>
            <person name="Kalogeropoulos A."/>
            <person name="Katsoulou C."/>
            <person name="Kordes E."/>
            <person name="Lafuente M.J."/>
            <person name="Landt O."/>
            <person name="Louis E.J."/>
            <person name="Maarse A.C."/>
            <person name="Madania A."/>
            <person name="Mannhaupt G."/>
            <person name="Marck C."/>
            <person name="Martin R.P."/>
            <person name="Mewes H.-W."/>
            <person name="Michaux G."/>
            <person name="Paces V."/>
            <person name="Parle-McDermott A.G."/>
            <person name="Pearson B.M."/>
            <person name="Perrin A."/>
            <person name="Pettersson B."/>
            <person name="Poch O."/>
            <person name="Pohl T.M."/>
            <person name="Poirey R."/>
            <person name="Portetelle D."/>
            <person name="Pujol A."/>
            <person name="Purnelle B."/>
            <person name="Ramezani Rad M."/>
            <person name="Rechmann S."/>
            <person name="Schwager C."/>
            <person name="Schweizer M."/>
            <person name="Sor F."/>
            <person name="Sterky F."/>
            <person name="Tarassov I.A."/>
            <person name="Teodoru C."/>
            <person name="Tettelin H."/>
            <person name="Thierry A."/>
            <person name="Tobiasch E."/>
            <person name="Tzermia M."/>
            <person name="Uhlen M."/>
            <person name="Unseld M."/>
            <person name="Valens M."/>
            <person name="Vandenbol M."/>
            <person name="Vetter I."/>
            <person name="Vlcek C."/>
            <person name="Voet M."/>
            <person name="Volckaert G."/>
            <person name="Voss H."/>
            <person name="Wambutt R."/>
            <person name="Wedler H."/>
            <person name="Wiemann S."/>
            <person name="Winsor B."/>
            <person name="Wolfe K.H."/>
            <person name="Zollner A."/>
            <person name="Zumstein E."/>
            <person name="Kleine K."/>
        </authorList>
    </citation>
    <scope>NUCLEOTIDE SEQUENCE [LARGE SCALE GENOMIC DNA]</scope>
    <source>
        <strain>ATCC 204508 / S288c</strain>
    </source>
</reference>
<reference key="3">
    <citation type="journal article" date="2014" name="G3 (Bethesda)">
        <title>The reference genome sequence of Saccharomyces cerevisiae: Then and now.</title>
        <authorList>
            <person name="Engel S.R."/>
            <person name="Dietrich F.S."/>
            <person name="Fisk D.G."/>
            <person name="Binkley G."/>
            <person name="Balakrishnan R."/>
            <person name="Costanzo M.C."/>
            <person name="Dwight S.S."/>
            <person name="Hitz B.C."/>
            <person name="Karra K."/>
            <person name="Nash R.S."/>
            <person name="Weng S."/>
            <person name="Wong E.D."/>
            <person name="Lloyd P."/>
            <person name="Skrzypek M.S."/>
            <person name="Miyasato S.R."/>
            <person name="Simison M."/>
            <person name="Cherry J.M."/>
        </authorList>
    </citation>
    <scope>GENOME REANNOTATION</scope>
    <source>
        <strain>ATCC 204508 / S288c</strain>
    </source>
</reference>
<reference key="4">
    <citation type="journal article" date="2007" name="Genome Res.">
        <title>Approaching a complete repository of sequence-verified protein-encoding clones for Saccharomyces cerevisiae.</title>
        <authorList>
            <person name="Hu Y."/>
            <person name="Rolfs A."/>
            <person name="Bhullar B."/>
            <person name="Murthy T.V.S."/>
            <person name="Zhu C."/>
            <person name="Berger M.F."/>
            <person name="Camargo A.A."/>
            <person name="Kelley F."/>
            <person name="McCarron S."/>
            <person name="Jepson D."/>
            <person name="Richardson A."/>
            <person name="Raphael J."/>
            <person name="Moreira D."/>
            <person name="Taycher E."/>
            <person name="Zuo D."/>
            <person name="Mohr S."/>
            <person name="Kane M.F."/>
            <person name="Williamson J."/>
            <person name="Simpson A.J.G."/>
            <person name="Bulyk M.L."/>
            <person name="Harlow E."/>
            <person name="Marsischky G."/>
            <person name="Kolodner R.D."/>
            <person name="LaBaer J."/>
        </authorList>
    </citation>
    <scope>NUCLEOTIDE SEQUENCE [GENOMIC DNA]</scope>
    <source>
        <strain>ATCC 204508 / S288c</strain>
    </source>
</reference>
<reference key="5">
    <citation type="journal article" date="2002" name="J. Biol. Chem.">
        <title>Erf4p and Erf2p form an endoplasmic reticulum-associated complex involved in the plasma membrane localization of yeast Ras proteins.</title>
        <authorList>
            <person name="Zhao L."/>
            <person name="Lobo S."/>
            <person name="Dong X."/>
            <person name="Ault A.D."/>
            <person name="Deschenes R.J."/>
        </authorList>
    </citation>
    <scope>FUNCTION</scope>
</reference>
<reference key="6">
    <citation type="journal article" date="2005" name="EMBO J.">
        <title>Swf1-dependent palmitoylation of the SNARE Tlg1 prevents its ubiquitination and degradation.</title>
        <authorList>
            <person name="Valdez-Taubas J."/>
            <person name="Pelham H.R.B."/>
        </authorList>
    </citation>
    <scope>SUBCELLULAR LOCATION</scope>
</reference>
<reference key="7">
    <citation type="journal article" date="2005" name="J. Cell Biol.">
        <title>The vacuolar DHHC-CRD protein Pfa3p is a protein acyltransferase for Vac8p.</title>
        <authorList>
            <person name="Smotrys J.E."/>
            <person name="Schoenfish M.J."/>
            <person name="Stutz M.A."/>
            <person name="Linder M.E."/>
        </authorList>
    </citation>
    <scope>AUTOPALMITOYLATION</scope>
</reference>
<reference key="8">
    <citation type="journal article" date="2006" name="Cell">
        <title>Global analysis of protein palmitoylation in yeast.</title>
        <authorList>
            <person name="Roth A.F."/>
            <person name="Wan J."/>
            <person name="Bailey A.O."/>
            <person name="Sun B."/>
            <person name="Kuchar J.A."/>
            <person name="Green W.N."/>
            <person name="Phinney B.S."/>
            <person name="Yates J.R. III"/>
            <person name="Davis N.G."/>
        </authorList>
    </citation>
    <scope>FUNCTION</scope>
</reference>
<reference key="9">
    <citation type="journal article" date="2006" name="J. Cell Biol.">
        <title>Palmitoylation by the DHHC protein Pfa4 regulates the ER exit of Chs3.</title>
        <authorList>
            <person name="Lam K.K.Y."/>
            <person name="Davey M."/>
            <person name="Sun B."/>
            <person name="Roth A.F."/>
            <person name="Davis N.G."/>
            <person name="Conibear E."/>
        </authorList>
    </citation>
    <scope>FUNCTION</scope>
    <scope>MUTAGENESIS OF CYS-108</scope>
    <scope>DISRUPTION PHENOTYPE</scope>
</reference>
<reference key="10">
    <citation type="journal article" date="2006" name="Proc. Natl. Acad. Sci. U.S.A.">
        <title>A global topology map of the Saccharomyces cerevisiae membrane proteome.</title>
        <authorList>
            <person name="Kim H."/>
            <person name="Melen K."/>
            <person name="Oesterberg M."/>
            <person name="von Heijne G."/>
        </authorList>
    </citation>
    <scope>TOPOLOGY [LARGE SCALE ANALYSIS]</scope>
    <source>
        <strain>ATCC 208353 / W303-1A</strain>
    </source>
</reference>
<reference key="11">
    <citation type="journal article" date="2015" name="J. Biol. Chem.">
        <title>The canonical DHHC motif is not absolutely required for the activity of the yeast S-acyltransferases Swf1 and Pfa4.</title>
        <authorList>
            <person name="Gonzalez Montoro A."/>
            <person name="Chumpen Ramirez S."/>
            <person name="Valdez Taubas J."/>
        </authorList>
    </citation>
    <scope>MUTAGENESIS OF CYS-108</scope>
</reference>
<reference key="12">
    <citation type="journal article" date="2017" name="Int. J. Mol. Sci.">
        <title>In Vitro and In Vivo Studies on the Structural Organization of Chs3 from Saccharomyces cerevisiae.</title>
        <authorList>
            <person name="Gohlke S."/>
            <person name="Muthukrishnan S."/>
            <person name="Merzendorfer H."/>
        </authorList>
    </citation>
    <scope>FUNCTION</scope>
    <scope>DISRUPTION PHENOTYPE</scope>
</reference>
<comment type="function">
    <text evidence="1 3 6 7 10">Mediates the reversible addition of palmitate to target proteins, thereby regulating their membrane association and biological function. Palmitoylates several amino acid permeases (PubMed:16751107). Palmitoylates chitin synthase CHS3, which is required for its proper export from the ER (PubMed:16818716, PubMed:28346351). Can palmitoylate RAS2 in vitro (PubMed:12379641).</text>
</comment>
<comment type="catalytic activity">
    <reaction evidence="1">
        <text>L-cysteinyl-[protein] + hexadecanoyl-CoA = S-hexadecanoyl-L-cysteinyl-[protein] + CoA</text>
        <dbReference type="Rhea" id="RHEA:36683"/>
        <dbReference type="Rhea" id="RHEA-COMP:10131"/>
        <dbReference type="Rhea" id="RHEA-COMP:11032"/>
        <dbReference type="ChEBI" id="CHEBI:29950"/>
        <dbReference type="ChEBI" id="CHEBI:57287"/>
        <dbReference type="ChEBI" id="CHEBI:57379"/>
        <dbReference type="ChEBI" id="CHEBI:74151"/>
        <dbReference type="EC" id="2.3.1.225"/>
    </reaction>
</comment>
<comment type="subcellular location">
    <subcellularLocation>
        <location evidence="1 4">Endoplasmic reticulum membrane</location>
        <topology evidence="1 4">Multi-pass membrane protein</topology>
    </subcellularLocation>
</comment>
<comment type="domain">
    <text evidence="1">The DHHC domain is required for palmitoyltransferase activity.</text>
</comment>
<comment type="PTM">
    <text evidence="5 9">Autopalmitoylated.</text>
</comment>
<comment type="disruption phenotype">
    <text evidence="7 10">Leads to the retention of non-palmitoylated CHS3 in the endoplasmic reticulum and reduced levels of chitin on the cell wall.</text>
</comment>
<comment type="similarity">
    <text evidence="1">Belongs to the DHHC palmitoyltransferase family. PFA4 subfamily.</text>
</comment>